<accession>P0AEF8</accession>
<accession>P37316</accession>
<accession>Q2M7K5</accession>
<keyword id="KW-0002">3D-structure</keyword>
<keyword id="KW-0997">Cell inner membrane</keyword>
<keyword id="KW-1003">Cell membrane</keyword>
<keyword id="KW-0472">Membrane</keyword>
<keyword id="KW-0571">Peptide transport</keyword>
<keyword id="KW-0653">Protein transport</keyword>
<keyword id="KW-1185">Reference proteome</keyword>
<keyword id="KW-0812">Transmembrane</keyword>
<keyword id="KW-1133">Transmembrane helix</keyword>
<keyword id="KW-0813">Transport</keyword>
<protein>
    <recommendedName>
        <fullName evidence="7">Dipeptide transport system permease protein DppB</fullName>
    </recommendedName>
</protein>
<reference key="1">
    <citation type="journal article" date="1994" name="Mol. Microbiol.">
        <title>The dipeptide permease of Escherichia coli closely resembles other bacterial transport systems and shows growth-phase-dependent expression.</title>
        <authorList>
            <person name="Abouhamad W.N."/>
            <person name="Manson M.D."/>
        </authorList>
    </citation>
    <scope>NUCLEOTIDE SEQUENCE [GENOMIC DNA]</scope>
    <scope>FUNCTION</scope>
    <scope>SUBUNIT</scope>
    <source>
        <strain>K12 / MM500</strain>
    </source>
</reference>
<reference key="2">
    <citation type="journal article" date="1994" name="Nucleic Acids Res.">
        <title>Analysis of the Escherichia coli genome. V. DNA sequence of the region from 76.0 to 81.5 minutes.</title>
        <authorList>
            <person name="Sofia H.J."/>
            <person name="Burland V."/>
            <person name="Daniels D.L."/>
            <person name="Plunkett G. III"/>
            <person name="Blattner F.R."/>
        </authorList>
    </citation>
    <scope>NUCLEOTIDE SEQUENCE [LARGE SCALE GENOMIC DNA]</scope>
    <source>
        <strain>K12 / MG1655 / ATCC 47076</strain>
    </source>
</reference>
<reference key="3">
    <citation type="journal article" date="1997" name="Science">
        <title>The complete genome sequence of Escherichia coli K-12.</title>
        <authorList>
            <person name="Blattner F.R."/>
            <person name="Plunkett G. III"/>
            <person name="Bloch C.A."/>
            <person name="Perna N.T."/>
            <person name="Burland V."/>
            <person name="Riley M."/>
            <person name="Collado-Vides J."/>
            <person name="Glasner J.D."/>
            <person name="Rode C.K."/>
            <person name="Mayhew G.F."/>
            <person name="Gregor J."/>
            <person name="Davis N.W."/>
            <person name="Kirkpatrick H.A."/>
            <person name="Goeden M.A."/>
            <person name="Rose D.J."/>
            <person name="Mau B."/>
            <person name="Shao Y."/>
        </authorList>
    </citation>
    <scope>NUCLEOTIDE SEQUENCE [LARGE SCALE GENOMIC DNA]</scope>
    <source>
        <strain>K12 / MG1655 / ATCC 47076</strain>
    </source>
</reference>
<reference key="4">
    <citation type="journal article" date="2006" name="Mol. Syst. Biol.">
        <title>Highly accurate genome sequences of Escherichia coli K-12 strains MG1655 and W3110.</title>
        <authorList>
            <person name="Hayashi K."/>
            <person name="Morooka N."/>
            <person name="Yamamoto Y."/>
            <person name="Fujita K."/>
            <person name="Isono K."/>
            <person name="Choi S."/>
            <person name="Ohtsubo E."/>
            <person name="Baba T."/>
            <person name="Wanner B.L."/>
            <person name="Mori H."/>
            <person name="Horiuchi T."/>
        </authorList>
    </citation>
    <scope>NUCLEOTIDE SEQUENCE [LARGE SCALE GENOMIC DNA]</scope>
    <source>
        <strain>K12 / W3110 / ATCC 27325 / DSM 5911</strain>
    </source>
</reference>
<reference key="5">
    <citation type="journal article" date="1993" name="J. Bacteriol.">
        <title>The periplasmic dipeptide permease system transports 5-aminolevulinic acid in Escherichia coli.</title>
        <authorList>
            <person name="Verkamp E."/>
            <person name="Backman V.M."/>
            <person name="Bjoernsson J.M."/>
            <person name="Soell D."/>
            <person name="Eggertsson G."/>
        </authorList>
    </citation>
    <scope>FUNCTION IN 5-AMINOLEVULINIC ACID TRANSPORT</scope>
</reference>
<reference key="6">
    <citation type="journal article" date="2005" name="Science">
        <title>Global topology analysis of the Escherichia coli inner membrane proteome.</title>
        <authorList>
            <person name="Daley D.O."/>
            <person name="Rapp M."/>
            <person name="Granseth E."/>
            <person name="Melen K."/>
            <person name="Drew D."/>
            <person name="von Heijne G."/>
        </authorList>
    </citation>
    <scope>TOPOLOGY [LARGE SCALE ANALYSIS]</scope>
    <scope>SUBCELLULAR LOCATION</scope>
    <source>
        <strain>K12 / MG1655 / ATCC 47076</strain>
    </source>
</reference>
<reference key="7">
    <citation type="journal article" date="2006" name="Proc. Natl. Acad. Sci. U.S.A.">
        <title>The housekeeping dipeptide permease is the Escherichia coli heme transporter and functions with two optional peptide binding proteins.</title>
        <authorList>
            <person name="Letoffe S."/>
            <person name="Delepelaire P."/>
            <person name="Wandersman C."/>
        </authorList>
    </citation>
    <scope>FUNCTION IN HEME TRANSPORT</scope>
    <scope>SUBUNIT</scope>
    <scope>DISRUPTION PHENOTYPE</scope>
</reference>
<feature type="chain" id="PRO_0000060005" description="Dipeptide transport system permease protein DppB">
    <location>
        <begin position="1"/>
        <end position="339"/>
    </location>
</feature>
<feature type="topological domain" description="Periplasmic" evidence="1">
    <location>
        <begin position="1"/>
        <end position="9"/>
    </location>
</feature>
<feature type="transmembrane region" description="Helical" evidence="2">
    <location>
        <begin position="10"/>
        <end position="30"/>
    </location>
</feature>
<feature type="topological domain" description="Cytoplasmic" evidence="1">
    <location>
        <begin position="31"/>
        <end position="102"/>
    </location>
</feature>
<feature type="transmembrane region" description="Helical" evidence="2">
    <location>
        <begin position="103"/>
        <end position="123"/>
    </location>
</feature>
<feature type="topological domain" description="Periplasmic" evidence="1">
    <location>
        <begin position="124"/>
        <end position="135"/>
    </location>
</feature>
<feature type="transmembrane region" description="Helical" evidence="2">
    <location>
        <begin position="136"/>
        <end position="156"/>
    </location>
</feature>
<feature type="topological domain" description="Cytoplasmic" evidence="1">
    <location>
        <begin position="157"/>
        <end position="171"/>
    </location>
</feature>
<feature type="transmembrane region" description="Helical" evidence="2">
    <location>
        <begin position="172"/>
        <end position="192"/>
    </location>
</feature>
<feature type="topological domain" description="Periplasmic" evidence="1">
    <location>
        <begin position="193"/>
        <end position="200"/>
    </location>
</feature>
<feature type="transmembrane region" description="Helical" evidence="2">
    <location>
        <begin position="201"/>
        <end position="221"/>
    </location>
</feature>
<feature type="topological domain" description="Cytoplasmic" evidence="1">
    <location>
        <begin position="222"/>
        <end position="259"/>
    </location>
</feature>
<feature type="transmembrane region" description="Helical" evidence="2">
    <location>
        <begin position="260"/>
        <end position="280"/>
    </location>
</feature>
<feature type="topological domain" description="Periplasmic" evidence="1">
    <location>
        <begin position="281"/>
        <end position="309"/>
    </location>
</feature>
<feature type="transmembrane region" description="Helical" evidence="2">
    <location>
        <begin position="310"/>
        <end position="330"/>
    </location>
</feature>
<feature type="topological domain" description="Cytoplasmic" evidence="1">
    <location>
        <begin position="331"/>
        <end position="339"/>
    </location>
</feature>
<feature type="domain" description="ABC transmembrane type-1" evidence="2">
    <location>
        <begin position="96"/>
        <end position="328"/>
    </location>
</feature>
<dbReference type="EMBL" id="L08399">
    <property type="protein sequence ID" value="AAA23703.1"/>
    <property type="molecule type" value="Genomic_DNA"/>
</dbReference>
<dbReference type="EMBL" id="U00039">
    <property type="protein sequence ID" value="AAB18521.1"/>
    <property type="molecule type" value="Genomic_DNA"/>
</dbReference>
<dbReference type="EMBL" id="U00096">
    <property type="protein sequence ID" value="AAC76568.1"/>
    <property type="molecule type" value="Genomic_DNA"/>
</dbReference>
<dbReference type="EMBL" id="AP009048">
    <property type="protein sequence ID" value="BAE77751.1"/>
    <property type="molecule type" value="Genomic_DNA"/>
</dbReference>
<dbReference type="PIR" id="S47765">
    <property type="entry name" value="S47765"/>
</dbReference>
<dbReference type="RefSeq" id="NP_418000.1">
    <property type="nucleotide sequence ID" value="NC_000913.3"/>
</dbReference>
<dbReference type="RefSeq" id="WP_000938855.1">
    <property type="nucleotide sequence ID" value="NZ_STEB01000018.1"/>
</dbReference>
<dbReference type="PDB" id="8Z1V">
    <property type="method" value="EM"/>
    <property type="resolution" value="3.16 A"/>
    <property type="chains" value="A=1-339"/>
</dbReference>
<dbReference type="PDB" id="8Z1W">
    <property type="method" value="EM"/>
    <property type="resolution" value="3.00 A"/>
    <property type="chains" value="A=1-339"/>
</dbReference>
<dbReference type="PDB" id="8Z1X">
    <property type="method" value="EM"/>
    <property type="resolution" value="3.20 A"/>
    <property type="chains" value="A=1-339"/>
</dbReference>
<dbReference type="PDB" id="8Z1Y">
    <property type="method" value="EM"/>
    <property type="resolution" value="2.73 A"/>
    <property type="chains" value="A=1-339"/>
</dbReference>
<dbReference type="PDBsum" id="8Z1V"/>
<dbReference type="PDBsum" id="8Z1W"/>
<dbReference type="PDBsum" id="8Z1X"/>
<dbReference type="PDBsum" id="8Z1Y"/>
<dbReference type="EMDB" id="EMD-39737"/>
<dbReference type="EMDB" id="EMD-39738"/>
<dbReference type="EMDB" id="EMD-39739"/>
<dbReference type="EMDB" id="EMD-39740"/>
<dbReference type="SMR" id="P0AEF8"/>
<dbReference type="BioGRID" id="4262535">
    <property type="interactions" value="186"/>
</dbReference>
<dbReference type="BioGRID" id="852371">
    <property type="interactions" value="1"/>
</dbReference>
<dbReference type="ComplexPortal" id="CPX-4345">
    <property type="entry name" value="Heme/dipeptide ABC transporter complex, dppA variant"/>
</dbReference>
<dbReference type="ComplexPortal" id="CPX-4346">
    <property type="entry name" value="Heme/dipeptide ABC transporter complex, mppA variant"/>
</dbReference>
<dbReference type="DIP" id="DIP-47927N"/>
<dbReference type="FunCoup" id="P0AEF8">
    <property type="interactions" value="366"/>
</dbReference>
<dbReference type="IntAct" id="P0AEF8">
    <property type="interactions" value="2"/>
</dbReference>
<dbReference type="STRING" id="511145.b3543"/>
<dbReference type="jPOST" id="P0AEF8"/>
<dbReference type="PaxDb" id="511145-b3543"/>
<dbReference type="EnsemblBacteria" id="AAC76568">
    <property type="protein sequence ID" value="AAC76568"/>
    <property type="gene ID" value="b3543"/>
</dbReference>
<dbReference type="GeneID" id="93778271"/>
<dbReference type="GeneID" id="948063"/>
<dbReference type="KEGG" id="ecj:JW3512"/>
<dbReference type="KEGG" id="eco:b3543"/>
<dbReference type="KEGG" id="ecoc:C3026_19200"/>
<dbReference type="PATRIC" id="fig|1411691.4.peg.3172"/>
<dbReference type="EchoBASE" id="EB2509"/>
<dbReference type="eggNOG" id="COG0601">
    <property type="taxonomic scope" value="Bacteria"/>
</dbReference>
<dbReference type="HOGENOM" id="CLU_036879_0_0_6"/>
<dbReference type="InParanoid" id="P0AEF8"/>
<dbReference type="OMA" id="PPVTGFM"/>
<dbReference type="OrthoDB" id="9805855at2"/>
<dbReference type="PhylomeDB" id="P0AEF8"/>
<dbReference type="BioCyc" id="EcoCyc:DPPB-MONOMER"/>
<dbReference type="BioCyc" id="MetaCyc:DPPB-MONOMER"/>
<dbReference type="PRO" id="PR:P0AEF8"/>
<dbReference type="Proteomes" id="UP000000625">
    <property type="component" value="Chromosome"/>
</dbReference>
<dbReference type="GO" id="GO:0055052">
    <property type="term" value="C:ATP-binding cassette (ABC) transporter complex, substrate-binding subunit-containing"/>
    <property type="evidence" value="ECO:0000303"/>
    <property type="project" value="ComplexPortal"/>
</dbReference>
<dbReference type="GO" id="GO:0016020">
    <property type="term" value="C:membrane"/>
    <property type="evidence" value="ECO:0000303"/>
    <property type="project" value="ComplexPortal"/>
</dbReference>
<dbReference type="GO" id="GO:0005886">
    <property type="term" value="C:plasma membrane"/>
    <property type="evidence" value="ECO:0000314"/>
    <property type="project" value="EcoCyc"/>
</dbReference>
<dbReference type="GO" id="GO:0071916">
    <property type="term" value="F:dipeptide transmembrane transporter activity"/>
    <property type="evidence" value="ECO:0000318"/>
    <property type="project" value="GO_Central"/>
</dbReference>
<dbReference type="GO" id="GO:0042938">
    <property type="term" value="P:dipeptide transport"/>
    <property type="evidence" value="ECO:0000303"/>
    <property type="project" value="ComplexPortal"/>
</dbReference>
<dbReference type="GO" id="GO:0035351">
    <property type="term" value="P:heme transmembrane transport"/>
    <property type="evidence" value="ECO:0000303"/>
    <property type="project" value="ComplexPortal"/>
</dbReference>
<dbReference type="GO" id="GO:0015031">
    <property type="term" value="P:protein transport"/>
    <property type="evidence" value="ECO:0007669"/>
    <property type="project" value="UniProtKB-KW"/>
</dbReference>
<dbReference type="CDD" id="cd06261">
    <property type="entry name" value="TM_PBP2"/>
    <property type="match status" value="1"/>
</dbReference>
<dbReference type="Gene3D" id="1.10.3720.10">
    <property type="entry name" value="MetI-like"/>
    <property type="match status" value="1"/>
</dbReference>
<dbReference type="InterPro" id="IPR045621">
    <property type="entry name" value="BPD_transp_1_N"/>
</dbReference>
<dbReference type="InterPro" id="IPR000515">
    <property type="entry name" value="MetI-like"/>
</dbReference>
<dbReference type="InterPro" id="IPR035906">
    <property type="entry name" value="MetI-like_sf"/>
</dbReference>
<dbReference type="NCBIfam" id="NF008161">
    <property type="entry name" value="PRK10914.1"/>
    <property type="match status" value="1"/>
</dbReference>
<dbReference type="PANTHER" id="PTHR43163">
    <property type="entry name" value="DIPEPTIDE TRANSPORT SYSTEM PERMEASE PROTEIN DPPB-RELATED"/>
    <property type="match status" value="1"/>
</dbReference>
<dbReference type="PANTHER" id="PTHR43163:SF6">
    <property type="entry name" value="DIPEPTIDE TRANSPORT SYSTEM PERMEASE PROTEIN DPPB-RELATED"/>
    <property type="match status" value="1"/>
</dbReference>
<dbReference type="Pfam" id="PF00528">
    <property type="entry name" value="BPD_transp_1"/>
    <property type="match status" value="1"/>
</dbReference>
<dbReference type="Pfam" id="PF19300">
    <property type="entry name" value="BPD_transp_1_N"/>
    <property type="match status" value="1"/>
</dbReference>
<dbReference type="SUPFAM" id="SSF161098">
    <property type="entry name" value="MetI-like"/>
    <property type="match status" value="1"/>
</dbReference>
<dbReference type="PROSITE" id="PS50928">
    <property type="entry name" value="ABC_TM1"/>
    <property type="match status" value="1"/>
</dbReference>
<gene>
    <name type="primary">dppB</name>
    <name type="ordered locus">b3543</name>
    <name type="ordered locus">JW3512</name>
</gene>
<name>DPPB_ECOLI</name>
<sequence length="339" mass="37497">MLQFILRRLGLVIPTFIGITLLTFAFVHMIPGDPVMIMAGERGISPERHAQLLAELGLDKPMWQQYLHYIWGVMHGDLGISMKSRIPVWEEFVPRFQATLELGVCAMIFATAVGIPVGVLAAVKRGSIFDHTAVGLALTGYSMPIFWWGMMLIMLVSVHWNLTPVSGRVSDMVFLDDSNPLTGFMLIDTAIWGEDGNFIDAVAHMILPAIVLGTIPLAVIVRMTRSSMLEVLGEDYIRTARAKGLTRMRVIIVHALRNAMLPVVTVIGLQVGTLLAGAILTETIFSWPGLGRWLIDALQRRDYPVVQGGVLLVATMIILVNLLVDLLYGVVNPRIRHKK</sequence>
<comment type="function">
    <text evidence="5 7">Part of the ABC transporter DppABCDF involved in dipeptide transport (PubMed:7536291). Responsible for the translocation of the substrate across the membrane (Probable).</text>
</comment>
<comment type="function">
    <text evidence="4 6">When a foreign outer membrane heme receptor is expressed in E.coli, DppABCDF can also transport heme and its precursor, 5-aminolevulinic acid (ALA), from the periplasm into the cytoplasm.</text>
</comment>
<comment type="subunit">
    <text evidence="4 5">The complex is composed of two ATP-binding proteins (DppD and DppF), two transmembrane proteins (DppB and DppC) and a solute-binding protein (DppA) (PubMed:16905647, PubMed:7536291). MppA can replace DppA as binding protein for heme and ALA transport (PubMed:16905647).</text>
</comment>
<comment type="subcellular location">
    <subcellularLocation>
        <location evidence="3">Cell inner membrane</location>
        <topology evidence="1">Multi-pass membrane protein</topology>
    </subcellularLocation>
</comment>
<comment type="disruption phenotype">
    <text evidence="4">Inactivation of the gene abolishes use of heme as an iron source.</text>
</comment>
<comment type="similarity">
    <text evidence="7">Belongs to the binding-protein-dependent transport system permease family. OppBC subfamily.</text>
</comment>
<organism>
    <name type="scientific">Escherichia coli (strain K12)</name>
    <dbReference type="NCBI Taxonomy" id="83333"/>
    <lineage>
        <taxon>Bacteria</taxon>
        <taxon>Pseudomonadati</taxon>
        <taxon>Pseudomonadota</taxon>
        <taxon>Gammaproteobacteria</taxon>
        <taxon>Enterobacterales</taxon>
        <taxon>Enterobacteriaceae</taxon>
        <taxon>Escherichia</taxon>
    </lineage>
</organism>
<proteinExistence type="evidence at protein level"/>
<evidence type="ECO:0000255" key="1"/>
<evidence type="ECO:0000255" key="2">
    <source>
        <dbReference type="PROSITE-ProRule" id="PRU00441"/>
    </source>
</evidence>
<evidence type="ECO:0000269" key="3">
    <source>
    </source>
</evidence>
<evidence type="ECO:0000269" key="4">
    <source>
    </source>
</evidence>
<evidence type="ECO:0000269" key="5">
    <source>
    </source>
</evidence>
<evidence type="ECO:0000269" key="6">
    <source>
    </source>
</evidence>
<evidence type="ECO:0000305" key="7"/>